<organism>
    <name type="scientific">Mus musculus</name>
    <name type="common">Mouse</name>
    <dbReference type="NCBI Taxonomy" id="10090"/>
    <lineage>
        <taxon>Eukaryota</taxon>
        <taxon>Metazoa</taxon>
        <taxon>Chordata</taxon>
        <taxon>Craniata</taxon>
        <taxon>Vertebrata</taxon>
        <taxon>Euteleostomi</taxon>
        <taxon>Mammalia</taxon>
        <taxon>Eutheria</taxon>
        <taxon>Euarchontoglires</taxon>
        <taxon>Glires</taxon>
        <taxon>Rodentia</taxon>
        <taxon>Myomorpha</taxon>
        <taxon>Muroidea</taxon>
        <taxon>Muridae</taxon>
        <taxon>Murinae</taxon>
        <taxon>Mus</taxon>
        <taxon>Mus</taxon>
    </lineage>
</organism>
<reference key="1">
    <citation type="journal article" date="2004" name="Genome Res.">
        <title>The status, quality, and expansion of the NIH full-length cDNA project: the Mammalian Gene Collection (MGC).</title>
        <authorList>
            <consortium name="The MGC Project Team"/>
        </authorList>
    </citation>
    <scope>NUCLEOTIDE SEQUENCE [LARGE SCALE MRNA]</scope>
    <source>
        <strain>FVB/N</strain>
        <tissue>Liver</tissue>
    </source>
</reference>
<reference key="2">
    <citation type="journal article" date="2008" name="J. Proteome Res.">
        <title>Specific phosphopeptide enrichment with immobilized titanium ion affinity chromatography adsorbent for phosphoproteome analysis.</title>
        <authorList>
            <person name="Zhou H."/>
            <person name="Ye M."/>
            <person name="Dong J."/>
            <person name="Han G."/>
            <person name="Jiang X."/>
            <person name="Wu R."/>
            <person name="Zou H."/>
        </authorList>
    </citation>
    <scope>IDENTIFICATION BY MASS SPECTROMETRY [LARGE SCALE ANALYSIS]</scope>
    <source>
        <tissue>Liver</tissue>
    </source>
</reference>
<reference key="3">
    <citation type="journal article" date="2010" name="Cell">
        <title>A tissue-specific atlas of mouse protein phosphorylation and expression.</title>
        <authorList>
            <person name="Huttlin E.L."/>
            <person name="Jedrychowski M.P."/>
            <person name="Elias J.E."/>
            <person name="Goswami T."/>
            <person name="Rad R."/>
            <person name="Beausoleil S.A."/>
            <person name="Villen J."/>
            <person name="Haas W."/>
            <person name="Sowa M.E."/>
            <person name="Gygi S.P."/>
        </authorList>
    </citation>
    <scope>IDENTIFICATION BY MASS SPECTROMETRY [LARGE SCALE ANALYSIS]</scope>
    <source>
        <tissue>Kidney</tissue>
        <tissue>Liver</tissue>
        <tissue>Spleen</tissue>
    </source>
</reference>
<reference key="4">
    <citation type="journal article" date="2017" name="N. Engl. J. Med.">
        <title>NAD deficiency, congenital malformations, and niacin supplementation.</title>
        <authorList>
            <person name="Shi H."/>
            <person name="Enriquez A."/>
            <person name="Rapadas M."/>
            <person name="Martin E.M.M.A."/>
            <person name="Wang R."/>
            <person name="Moreau J."/>
            <person name="Lim C.K."/>
            <person name="Szot J.O."/>
            <person name="Ip E."/>
            <person name="Hughes J.N."/>
            <person name="Sugimoto K."/>
            <person name="Humphreys D.T."/>
            <person name="McInerney-Leo A.M."/>
            <person name="Leo P.J."/>
            <person name="Maghzal G.J."/>
            <person name="Halliday J."/>
            <person name="Smith J."/>
            <person name="Colley A."/>
            <person name="Mark P.R."/>
            <person name="Collins F."/>
            <person name="Sillence D.O."/>
            <person name="Winlaw D.S."/>
            <person name="Ho J.W.K."/>
            <person name="Guillemin G.J."/>
            <person name="Brown M.A."/>
            <person name="Kikuchi K."/>
            <person name="Thomas P.Q."/>
            <person name="Stocker R."/>
            <person name="Giannoulatou E."/>
            <person name="Chapman G."/>
            <person name="Duncan E.L."/>
            <person name="Sparrow D.B."/>
            <person name="Dunwoodie S.L."/>
        </authorList>
    </citation>
    <scope>DISRUPTION PHENOTYPE</scope>
    <scope>PATHWAY</scope>
</reference>
<proteinExistence type="evidence at protein level"/>
<keyword id="KW-0963">Cytoplasm</keyword>
<keyword id="KW-0223">Dioxygenase</keyword>
<keyword id="KW-0408">Iron</keyword>
<keyword id="KW-0479">Metal-binding</keyword>
<keyword id="KW-0560">Oxidoreductase</keyword>
<keyword id="KW-0662">Pyridine nucleotide biosynthesis</keyword>
<keyword id="KW-1185">Reference proteome</keyword>
<evidence type="ECO:0000255" key="1">
    <source>
        <dbReference type="HAMAP-Rule" id="MF_03019"/>
    </source>
</evidence>
<evidence type="ECO:0000269" key="2">
    <source>
    </source>
</evidence>
<name>3HAO_MOUSE</name>
<sequence>MERRVRVKSWVEENRASFQPPVCNKLMHQEQLKIMFVGGPNTRKDYHIEEGEEVFYQLEGDMILRVLEQGQHRDVPIRQGEIFLLPARVPHSPQRFANTMGLVIERRRLESELDGLRYYVGDTEDVLFEKWFHCKDLGTQLAPIIQEFFHSEQYRTGKPNPDQLLKELPFPLNTRSIMKPMSLKAWLDGHSRELQAGTSLSLFGDSYETQVIAHGQGSSKGPRQDVDVWLWQQEGSSKVTMGGQCIALAPDDSLLVPAGTSYVWERAQGSVALSVTQDPARKKPWW</sequence>
<accession>Q78JT3</accession>
<accession>Q52L88</accession>
<gene>
    <name type="primary">Haao</name>
</gene>
<feature type="chain" id="PRO_0000064373" description="3-hydroxyanthranilate 3,4-dioxygenase">
    <location>
        <begin position="1"/>
        <end position="286"/>
    </location>
</feature>
<feature type="region of interest" description="Domain A (catalytic)" evidence="1">
    <location>
        <begin position="1"/>
        <end position="160"/>
    </location>
</feature>
<feature type="region of interest" description="Linker" evidence="1">
    <location>
        <begin position="161"/>
        <end position="177"/>
    </location>
</feature>
<feature type="region of interest" description="Domain B" evidence="1">
    <location>
        <begin position="178"/>
        <end position="286"/>
    </location>
</feature>
<feature type="binding site" evidence="1">
    <location>
        <position position="43"/>
    </location>
    <ligand>
        <name>O2</name>
        <dbReference type="ChEBI" id="CHEBI:15379"/>
    </ligand>
</feature>
<feature type="binding site" evidence="1">
    <location>
        <position position="47"/>
    </location>
    <ligand>
        <name>Fe cation</name>
        <dbReference type="ChEBI" id="CHEBI:24875"/>
        <note>catalytic</note>
    </ligand>
</feature>
<feature type="binding site" evidence="1">
    <location>
        <position position="53"/>
    </location>
    <ligand>
        <name>Fe cation</name>
        <dbReference type="ChEBI" id="CHEBI:24875"/>
        <note>catalytic</note>
    </ligand>
</feature>
<feature type="binding site" evidence="1">
    <location>
        <position position="53"/>
    </location>
    <ligand>
        <name>substrate</name>
    </ligand>
</feature>
<feature type="binding site" evidence="1">
    <location>
        <position position="91"/>
    </location>
    <ligand>
        <name>Fe cation</name>
        <dbReference type="ChEBI" id="CHEBI:24875"/>
        <note>catalytic</note>
    </ligand>
</feature>
<feature type="binding site" evidence="1">
    <location>
        <position position="95"/>
    </location>
    <ligand>
        <name>substrate</name>
    </ligand>
</feature>
<feature type="binding site" evidence="1">
    <location>
        <position position="105"/>
    </location>
    <ligand>
        <name>substrate</name>
    </ligand>
</feature>
<comment type="function">
    <text evidence="1">Catalyzes the oxidative ring opening of 3-hydroxyanthranilate to 2-amino-3-carboxymuconate semialdehyde, which spontaneously cyclizes to quinolinate.</text>
</comment>
<comment type="catalytic activity">
    <reaction evidence="1">
        <text>3-hydroxyanthranilate + O2 = (2Z,4Z)-2-amino-3-carboxymuconate 6-semialdehyde</text>
        <dbReference type="Rhea" id="RHEA:17953"/>
        <dbReference type="ChEBI" id="CHEBI:15379"/>
        <dbReference type="ChEBI" id="CHEBI:36559"/>
        <dbReference type="ChEBI" id="CHEBI:77612"/>
        <dbReference type="EC" id="1.13.11.6"/>
    </reaction>
</comment>
<comment type="cofactor">
    <cofactor evidence="1">
        <name>Fe(2+)</name>
        <dbReference type="ChEBI" id="CHEBI:29033"/>
    </cofactor>
</comment>
<comment type="pathway">
    <text evidence="1">Cofactor biosynthesis; NAD(+) biosynthesis; quinolinate from L-kynurenine: step 3/3.</text>
</comment>
<comment type="subunit">
    <text evidence="1 2">Monomer.</text>
</comment>
<comment type="subcellular location">
    <subcellularLocation>
        <location evidence="1">Cytoplasm</location>
        <location evidence="1">Cytosol</location>
    </subcellularLocation>
</comment>
<comment type="disruption phenotype">
    <text evidence="2">No visible phenotype. Mice were born at the expected Mendelian ratio and are normal. They however show very high levels of 3-hydroxyanthranilate compared to wild-type mice.</text>
</comment>
<comment type="similarity">
    <text evidence="1">Belongs to the 3-HAO family.</text>
</comment>
<protein>
    <recommendedName>
        <fullName evidence="1">3-hydroxyanthranilate 3,4-dioxygenase</fullName>
        <ecNumber evidence="1">1.13.11.6</ecNumber>
    </recommendedName>
    <alternativeName>
        <fullName evidence="1">3-hydroxyanthranilate oxygenase</fullName>
        <shortName evidence="1">3-HAO</shortName>
    </alternativeName>
    <alternativeName>
        <fullName evidence="1">3-hydroxyanthranilic acid dioxygenase</fullName>
        <shortName evidence="1">HAD</shortName>
    </alternativeName>
</protein>
<dbReference type="EC" id="1.13.11.6" evidence="1"/>
<dbReference type="EMBL" id="BC012872">
    <property type="protein sequence ID" value="AAH12872.1"/>
    <property type="molecule type" value="mRNA"/>
</dbReference>
<dbReference type="EMBL" id="BC094021">
    <property type="protein sequence ID" value="AAH94021.1"/>
    <property type="molecule type" value="mRNA"/>
</dbReference>
<dbReference type="CCDS" id="CCDS37709.1"/>
<dbReference type="RefSeq" id="NP_079601.1">
    <property type="nucleotide sequence ID" value="NM_025325.2"/>
</dbReference>
<dbReference type="RefSeq" id="XP_006523526.1">
    <property type="nucleotide sequence ID" value="XM_006523463.5"/>
</dbReference>
<dbReference type="RefSeq" id="XP_030105301.1">
    <property type="nucleotide sequence ID" value="XM_030249441.2"/>
</dbReference>
<dbReference type="SMR" id="Q78JT3"/>
<dbReference type="FunCoup" id="Q78JT3">
    <property type="interactions" value="619"/>
</dbReference>
<dbReference type="IntAct" id="Q78JT3">
    <property type="interactions" value="1"/>
</dbReference>
<dbReference type="MINT" id="Q78JT3"/>
<dbReference type="STRING" id="10090.ENSMUSP00000000687"/>
<dbReference type="GlyGen" id="Q78JT3">
    <property type="glycosylation" value="1 site, 1 O-linked glycan (1 site)"/>
</dbReference>
<dbReference type="iPTMnet" id="Q78JT3"/>
<dbReference type="PhosphoSitePlus" id="Q78JT3"/>
<dbReference type="jPOST" id="Q78JT3"/>
<dbReference type="PaxDb" id="10090-ENSMUSP00000000687"/>
<dbReference type="PeptideAtlas" id="Q78JT3"/>
<dbReference type="ProteomicsDB" id="285816"/>
<dbReference type="Antibodypedia" id="29790">
    <property type="antibodies" value="173 antibodies from 32 providers"/>
</dbReference>
<dbReference type="DNASU" id="107766"/>
<dbReference type="Ensembl" id="ENSMUST00000000687.9">
    <property type="protein sequence ID" value="ENSMUSP00000000687.8"/>
    <property type="gene ID" value="ENSMUSG00000000673.10"/>
</dbReference>
<dbReference type="GeneID" id="107766"/>
<dbReference type="KEGG" id="mmu:107766"/>
<dbReference type="UCSC" id="uc008dsk.1">
    <property type="organism name" value="mouse"/>
</dbReference>
<dbReference type="AGR" id="MGI:1349444"/>
<dbReference type="CTD" id="23498"/>
<dbReference type="MGI" id="MGI:1349444">
    <property type="gene designation" value="Haao"/>
</dbReference>
<dbReference type="VEuPathDB" id="HostDB:ENSMUSG00000000673"/>
<dbReference type="eggNOG" id="KOG3995">
    <property type="taxonomic scope" value="Eukaryota"/>
</dbReference>
<dbReference type="GeneTree" id="ENSGT00390000013008"/>
<dbReference type="HOGENOM" id="CLU_064845_1_0_1"/>
<dbReference type="InParanoid" id="Q78JT3"/>
<dbReference type="OMA" id="MWLWQLE"/>
<dbReference type="OrthoDB" id="204928at2759"/>
<dbReference type="PhylomeDB" id="Q78JT3"/>
<dbReference type="TreeFam" id="TF300246"/>
<dbReference type="Reactome" id="R-MMU-71240">
    <property type="pathway name" value="Tryptophan catabolism"/>
</dbReference>
<dbReference type="UniPathway" id="UPA00253">
    <property type="reaction ID" value="UER00330"/>
</dbReference>
<dbReference type="BioGRID-ORCS" id="107766">
    <property type="hits" value="4 hits in 79 CRISPR screens"/>
</dbReference>
<dbReference type="ChiTaRS" id="Haao">
    <property type="organism name" value="mouse"/>
</dbReference>
<dbReference type="PRO" id="PR:Q78JT3"/>
<dbReference type="Proteomes" id="UP000000589">
    <property type="component" value="Chromosome 17"/>
</dbReference>
<dbReference type="RNAct" id="Q78JT3">
    <property type="molecule type" value="protein"/>
</dbReference>
<dbReference type="Bgee" id="ENSMUSG00000000673">
    <property type="expression patterns" value="Expressed in right kidney and 62 other cell types or tissues"/>
</dbReference>
<dbReference type="ExpressionAtlas" id="Q78JT3">
    <property type="expression patterns" value="baseline and differential"/>
</dbReference>
<dbReference type="GO" id="GO:0005829">
    <property type="term" value="C:cytosol"/>
    <property type="evidence" value="ECO:0000314"/>
    <property type="project" value="MGI"/>
</dbReference>
<dbReference type="GO" id="GO:0000334">
    <property type="term" value="F:3-hydroxyanthranilate 3,4-dioxygenase activity"/>
    <property type="evidence" value="ECO:0000314"/>
    <property type="project" value="MGI"/>
</dbReference>
<dbReference type="GO" id="GO:0008198">
    <property type="term" value="F:ferrous iron binding"/>
    <property type="evidence" value="ECO:0000250"/>
    <property type="project" value="UniProtKB"/>
</dbReference>
<dbReference type="GO" id="GO:0034354">
    <property type="term" value="P:'de novo' NAD biosynthetic process from L-tryptophan"/>
    <property type="evidence" value="ECO:0007669"/>
    <property type="project" value="UniProtKB-UniRule"/>
</dbReference>
<dbReference type="GO" id="GO:0043420">
    <property type="term" value="P:anthranilate metabolic process"/>
    <property type="evidence" value="ECO:0007669"/>
    <property type="project" value="UniProtKB-UniRule"/>
</dbReference>
<dbReference type="GO" id="GO:0043648">
    <property type="term" value="P:dicarboxylic acid metabolic process"/>
    <property type="evidence" value="ECO:0000316"/>
    <property type="project" value="MGI"/>
</dbReference>
<dbReference type="GO" id="GO:0006569">
    <property type="term" value="P:L-tryptophan catabolic process"/>
    <property type="evidence" value="ECO:0000316"/>
    <property type="project" value="MGI"/>
</dbReference>
<dbReference type="GO" id="GO:0009435">
    <property type="term" value="P:NAD biosynthetic process"/>
    <property type="evidence" value="ECO:0000250"/>
    <property type="project" value="UniProtKB"/>
</dbReference>
<dbReference type="GO" id="GO:0070050">
    <property type="term" value="P:neuron cellular homeostasis"/>
    <property type="evidence" value="ECO:0007669"/>
    <property type="project" value="Ensembl"/>
</dbReference>
<dbReference type="GO" id="GO:0019805">
    <property type="term" value="P:quinolinate biosynthetic process"/>
    <property type="evidence" value="ECO:0000250"/>
    <property type="project" value="UniProtKB"/>
</dbReference>
<dbReference type="GO" id="GO:0046686">
    <property type="term" value="P:response to cadmium ion"/>
    <property type="evidence" value="ECO:0007669"/>
    <property type="project" value="Ensembl"/>
</dbReference>
<dbReference type="GO" id="GO:0010043">
    <property type="term" value="P:response to zinc ion"/>
    <property type="evidence" value="ECO:0007669"/>
    <property type="project" value="Ensembl"/>
</dbReference>
<dbReference type="CDD" id="cd06123">
    <property type="entry name" value="cupin_HAO"/>
    <property type="match status" value="1"/>
</dbReference>
<dbReference type="FunFam" id="2.60.120.10:FF:000077">
    <property type="entry name" value="3-hydroxyanthranilate 3,4-dioxygenase"/>
    <property type="match status" value="1"/>
</dbReference>
<dbReference type="Gene3D" id="2.60.120.10">
    <property type="entry name" value="Jelly Rolls"/>
    <property type="match status" value="1"/>
</dbReference>
<dbReference type="HAMAP" id="MF_00825">
    <property type="entry name" value="3_HAO"/>
    <property type="match status" value="1"/>
</dbReference>
<dbReference type="InterPro" id="IPR010329">
    <property type="entry name" value="3hydroanth_dOase"/>
</dbReference>
<dbReference type="InterPro" id="IPR016700">
    <property type="entry name" value="3hydroanth_dOase_met"/>
</dbReference>
<dbReference type="InterPro" id="IPR014710">
    <property type="entry name" value="RmlC-like_jellyroll"/>
</dbReference>
<dbReference type="InterPro" id="IPR011051">
    <property type="entry name" value="RmlC_Cupin_sf"/>
</dbReference>
<dbReference type="NCBIfam" id="TIGR03037">
    <property type="entry name" value="anthran_nbaC"/>
    <property type="match status" value="1"/>
</dbReference>
<dbReference type="PANTHER" id="PTHR15497">
    <property type="entry name" value="3-HYDROXYANTHRANILATE 3,4-DIOXYGENASE"/>
    <property type="match status" value="1"/>
</dbReference>
<dbReference type="PANTHER" id="PTHR15497:SF1">
    <property type="entry name" value="3-HYDROXYANTHRANILATE 3,4-DIOXYGENASE"/>
    <property type="match status" value="1"/>
</dbReference>
<dbReference type="Pfam" id="PF06052">
    <property type="entry name" value="3-HAO"/>
    <property type="match status" value="1"/>
</dbReference>
<dbReference type="PIRSF" id="PIRSF017681">
    <property type="entry name" value="3hydroanth_dOase_animal"/>
    <property type="match status" value="1"/>
</dbReference>
<dbReference type="SUPFAM" id="SSF51182">
    <property type="entry name" value="RmlC-like cupins"/>
    <property type="match status" value="2"/>
</dbReference>